<organism>
    <name type="scientific">Cereibacter sphaeroides (strain ATCC 17029 / ATH 2.4.9)</name>
    <name type="common">Rhodobacter sphaeroides</name>
    <dbReference type="NCBI Taxonomy" id="349101"/>
    <lineage>
        <taxon>Bacteria</taxon>
        <taxon>Pseudomonadati</taxon>
        <taxon>Pseudomonadota</taxon>
        <taxon>Alphaproteobacteria</taxon>
        <taxon>Rhodobacterales</taxon>
        <taxon>Paracoccaceae</taxon>
        <taxon>Cereibacter</taxon>
    </lineage>
</organism>
<reference key="1">
    <citation type="submission" date="2007-02" db="EMBL/GenBank/DDBJ databases">
        <title>Complete sequence of chromosome 1 of Rhodobacter sphaeroides ATCC 17029.</title>
        <authorList>
            <person name="Copeland A."/>
            <person name="Lucas S."/>
            <person name="Lapidus A."/>
            <person name="Barry K."/>
            <person name="Detter J.C."/>
            <person name="Glavina del Rio T."/>
            <person name="Hammon N."/>
            <person name="Israni S."/>
            <person name="Dalin E."/>
            <person name="Tice H."/>
            <person name="Pitluck S."/>
            <person name="Kiss H."/>
            <person name="Brettin T."/>
            <person name="Bruce D."/>
            <person name="Han C."/>
            <person name="Tapia R."/>
            <person name="Gilna P."/>
            <person name="Schmutz J."/>
            <person name="Larimer F."/>
            <person name="Land M."/>
            <person name="Hauser L."/>
            <person name="Kyrpides N."/>
            <person name="Mikhailova N."/>
            <person name="Richardson P."/>
            <person name="Mackenzie C."/>
            <person name="Choudhary M."/>
            <person name="Donohue T.J."/>
            <person name="Kaplan S."/>
        </authorList>
    </citation>
    <scope>NUCLEOTIDE SEQUENCE [LARGE SCALE GENOMIC DNA]</scope>
    <source>
        <strain>ATCC 17029 / ATH 2.4.9</strain>
    </source>
</reference>
<gene>
    <name evidence="1" type="primary">ureF</name>
    <name type="ordered locus">Rsph17029_1947</name>
</gene>
<dbReference type="EMBL" id="CP000577">
    <property type="protein sequence ID" value="ABN77051.1"/>
    <property type="molecule type" value="Genomic_DNA"/>
</dbReference>
<dbReference type="RefSeq" id="WP_011841338.1">
    <property type="nucleotide sequence ID" value="NC_009049.1"/>
</dbReference>
<dbReference type="SMR" id="A3PL35"/>
<dbReference type="KEGG" id="rsh:Rsph17029_1947"/>
<dbReference type="HOGENOM" id="CLU_049215_2_0_5"/>
<dbReference type="GO" id="GO:0005737">
    <property type="term" value="C:cytoplasm"/>
    <property type="evidence" value="ECO:0007669"/>
    <property type="project" value="UniProtKB-SubCell"/>
</dbReference>
<dbReference type="GO" id="GO:0016151">
    <property type="term" value="F:nickel cation binding"/>
    <property type="evidence" value="ECO:0007669"/>
    <property type="project" value="UniProtKB-UniRule"/>
</dbReference>
<dbReference type="Gene3D" id="1.10.4190.10">
    <property type="entry name" value="Urease accessory protein UreF"/>
    <property type="match status" value="1"/>
</dbReference>
<dbReference type="HAMAP" id="MF_01385">
    <property type="entry name" value="UreF"/>
    <property type="match status" value="1"/>
</dbReference>
<dbReference type="InterPro" id="IPR002639">
    <property type="entry name" value="UreF"/>
</dbReference>
<dbReference type="InterPro" id="IPR038277">
    <property type="entry name" value="UreF_sf"/>
</dbReference>
<dbReference type="PANTHER" id="PTHR33620">
    <property type="entry name" value="UREASE ACCESSORY PROTEIN F"/>
    <property type="match status" value="1"/>
</dbReference>
<dbReference type="PANTHER" id="PTHR33620:SF1">
    <property type="entry name" value="UREASE ACCESSORY PROTEIN F"/>
    <property type="match status" value="1"/>
</dbReference>
<dbReference type="Pfam" id="PF01730">
    <property type="entry name" value="UreF"/>
    <property type="match status" value="1"/>
</dbReference>
<dbReference type="PIRSF" id="PIRSF009467">
    <property type="entry name" value="Ureas_acces_UreF"/>
    <property type="match status" value="1"/>
</dbReference>
<comment type="function">
    <text evidence="1">Required for maturation of urease via the functional incorporation of the urease nickel metallocenter.</text>
</comment>
<comment type="subunit">
    <text evidence="1">UreD, UreF and UreG form a complex that acts as a GTP-hydrolysis-dependent molecular chaperone, activating the urease apoprotein by helping to assemble the nickel containing metallocenter of UreC. The UreE protein probably delivers the nickel.</text>
</comment>
<comment type="subcellular location">
    <subcellularLocation>
        <location evidence="1">Cytoplasm</location>
    </subcellularLocation>
</comment>
<comment type="similarity">
    <text evidence="1">Belongs to the UreF family.</text>
</comment>
<feature type="chain" id="PRO_5000227599" description="Urease accessory protein UreF">
    <location>
        <begin position="1"/>
        <end position="210"/>
    </location>
</feature>
<name>UREF_CERS1</name>
<accession>A3PL35</accession>
<proteinExistence type="inferred from homology"/>
<evidence type="ECO:0000255" key="1">
    <source>
        <dbReference type="HAMAP-Rule" id="MF_01385"/>
    </source>
</evidence>
<protein>
    <recommendedName>
        <fullName evidence="1">Urease accessory protein UreF</fullName>
    </recommendedName>
</protein>
<sequence>MSAALLSLVQWLSPAFPTGAFAYSHGLEWAISEGEVRDAASARRWIADVLAFGAGRTDAILLAHALRGHDPEALSDLARALAPAAERLRETEEQGAAFAATVAALTGRDLPPRPLPVALGQAAAPLGLPVAEVLALMLHAFAANLVSAAVRFVPLGQTEGQATLAALHPLIGEIAAESAEAPLDALGSAALRGDLAAMRHETQEVRIFKT</sequence>
<keyword id="KW-0143">Chaperone</keyword>
<keyword id="KW-0963">Cytoplasm</keyword>
<keyword id="KW-0996">Nickel insertion</keyword>